<gene>
    <name type="primary">SU2</name>
</gene>
<proteinExistence type="inferred from homology"/>
<evidence type="ECO:0000250" key="1"/>
<evidence type="ECO:0000305" key="2"/>
<dbReference type="EMBL" id="AF053983">
    <property type="protein sequence ID" value="AAC08410.1"/>
    <property type="molecule type" value="Genomic_DNA"/>
</dbReference>
<dbReference type="SMR" id="O59948"/>
<dbReference type="VEuPathDB" id="FungiDB:PODANS_7_8260"/>
<dbReference type="GO" id="GO:0005737">
    <property type="term" value="C:cytoplasm"/>
    <property type="evidence" value="ECO:0007669"/>
    <property type="project" value="UniProtKB-SubCell"/>
</dbReference>
<dbReference type="GO" id="GO:0003747">
    <property type="term" value="F:translation release factor activity"/>
    <property type="evidence" value="ECO:0007669"/>
    <property type="project" value="InterPro"/>
</dbReference>
<dbReference type="FunFam" id="3.30.420.60:FF:000001">
    <property type="entry name" value="Eukaryotic peptide chain release factor subunit 1"/>
    <property type="match status" value="1"/>
</dbReference>
<dbReference type="FunFam" id="3.30.960.10:FF:000001">
    <property type="entry name" value="Eukaryotic peptide chain release factor subunit 1"/>
    <property type="match status" value="1"/>
</dbReference>
<dbReference type="FunFam" id="3.30.1330.30:FF:000006">
    <property type="entry name" value="Peptide chain release factor subunit 1"/>
    <property type="match status" value="1"/>
</dbReference>
<dbReference type="Gene3D" id="3.30.1330.30">
    <property type="match status" value="1"/>
</dbReference>
<dbReference type="Gene3D" id="3.30.960.10">
    <property type="entry name" value="eRF1 domain 1"/>
    <property type="match status" value="1"/>
</dbReference>
<dbReference type="Gene3D" id="3.30.420.60">
    <property type="entry name" value="eRF1 domain 2"/>
    <property type="match status" value="1"/>
</dbReference>
<dbReference type="InterPro" id="IPR042226">
    <property type="entry name" value="eFR1_2_sf"/>
</dbReference>
<dbReference type="InterPro" id="IPR005140">
    <property type="entry name" value="eRF1_1_Pelota"/>
</dbReference>
<dbReference type="InterPro" id="IPR024049">
    <property type="entry name" value="eRF1_1_sf"/>
</dbReference>
<dbReference type="InterPro" id="IPR005141">
    <property type="entry name" value="eRF1_2"/>
</dbReference>
<dbReference type="InterPro" id="IPR005142">
    <property type="entry name" value="eRF1_3"/>
</dbReference>
<dbReference type="InterPro" id="IPR004403">
    <property type="entry name" value="Peptide_chain-rel_eRF1/aRF1"/>
</dbReference>
<dbReference type="InterPro" id="IPR029064">
    <property type="entry name" value="Ribosomal_eL30-like_sf"/>
</dbReference>
<dbReference type="NCBIfam" id="TIGR03676">
    <property type="entry name" value="aRF1_eRF1"/>
    <property type="match status" value="1"/>
</dbReference>
<dbReference type="PANTHER" id="PTHR10113">
    <property type="entry name" value="PEPTIDE CHAIN RELEASE FACTOR SUBUNIT 1"/>
    <property type="match status" value="1"/>
</dbReference>
<dbReference type="Pfam" id="PF03463">
    <property type="entry name" value="eRF1_1"/>
    <property type="match status" value="1"/>
</dbReference>
<dbReference type="Pfam" id="PF03464">
    <property type="entry name" value="eRF1_2"/>
    <property type="match status" value="1"/>
</dbReference>
<dbReference type="Pfam" id="PF03465">
    <property type="entry name" value="eRF1_3"/>
    <property type="match status" value="1"/>
</dbReference>
<dbReference type="SMART" id="SM01194">
    <property type="entry name" value="eRF1_1"/>
    <property type="match status" value="1"/>
</dbReference>
<dbReference type="SUPFAM" id="SSF55315">
    <property type="entry name" value="L30e-like"/>
    <property type="match status" value="1"/>
</dbReference>
<dbReference type="SUPFAM" id="SSF55481">
    <property type="entry name" value="N-terminal domain of eukaryotic peptide chain release factor subunit 1, ERF1"/>
    <property type="match status" value="1"/>
</dbReference>
<dbReference type="SUPFAM" id="SSF53137">
    <property type="entry name" value="Translational machinery components"/>
    <property type="match status" value="1"/>
</dbReference>
<name>ERF1_PODAS</name>
<accession>O59948</accession>
<feature type="chain" id="PRO_0000143165" description="Eukaryotic peptide chain release factor subunit 1">
    <location>
        <begin position="1"/>
        <end position="435"/>
    </location>
</feature>
<organism>
    <name type="scientific">Podospora anserina</name>
    <name type="common">Pleurage anserina</name>
    <dbReference type="NCBI Taxonomy" id="2587412"/>
    <lineage>
        <taxon>Eukaryota</taxon>
        <taxon>Fungi</taxon>
        <taxon>Dikarya</taxon>
        <taxon>Ascomycota</taxon>
        <taxon>Pezizomycotina</taxon>
        <taxon>Sordariomycetes</taxon>
        <taxon>Sordariomycetidae</taxon>
        <taxon>Sordariales</taxon>
        <taxon>Podosporaceae</taxon>
        <taxon>Podospora</taxon>
    </lineage>
</organism>
<comment type="function">
    <text evidence="1">Directs the termination of nascent peptide synthesis (translation) in response to the termination codons UAA, UAG and UGA.</text>
</comment>
<comment type="subunit">
    <text>Heterodimer of two subunits, one of which binds GTP.</text>
</comment>
<comment type="subcellular location">
    <subcellularLocation>
        <location evidence="1">Cytoplasm</location>
    </subcellularLocation>
</comment>
<comment type="similarity">
    <text evidence="2">Belongs to the eukaryotic release factor 1 family.</text>
</comment>
<reference key="1">
    <citation type="journal article" date="1998" name="Genetics">
        <title>Identification of the genes encoding the cytosolic translation release factors from Podospora anserina and analysis of their role during the life cycle.</title>
        <authorList>
            <person name="Gagny B."/>
            <person name="Silar P."/>
        </authorList>
    </citation>
    <scope>NUCLEOTIDE SEQUENCE [GENOMIC DNA]</scope>
    <source>
        <strain>s</strain>
    </source>
</reference>
<protein>
    <recommendedName>
        <fullName>Eukaryotic peptide chain release factor subunit 1</fullName>
        <shortName>Eukaryotic release factor 1</shortName>
        <shortName>eRF1</shortName>
    </recommendedName>
</protein>
<keyword id="KW-0963">Cytoplasm</keyword>
<keyword id="KW-0648">Protein biosynthesis</keyword>
<sequence length="435" mass="48916">MSDPNANEAEKNIEIWKVKKLIKRLEAARGNGTSMISLIIPPKDQISRAAKMLAEEYGTASNIKSRVNRQSVLSAITSTQQRLKLYNKVPPNGLVVYCGEILTSEGKERKVNIDFEPFKPINTSLYLCDNKFHTEALAELLESDQKFGFIVMDGNGALFGTLSGNTRDIVHKFSVDLPKKHGRGGQSALRFARLREEKRHNYVRKVAELAVQNFITNDKVNVMGIVLAGSADFKNDLNASDMFDQRLATKVIKVVDVSYGGENGFNQAIELASETLGNVKFIQEKKLIGKYFEEISQDTGRICYGVEDTLKALELGAVETLIVFENLEVTRWVLKDSNGAEIIIHSTKQQDAANRDRFMDKETGQEMEVVSQESFLEWIAEHYKDFGTTLEFVSDRSTEGNQFVKGFGGIGGILRYKVNFEQLNEVDDDDEYYDD</sequence>